<gene>
    <name evidence="1" type="primary">groEL</name>
    <name evidence="1" type="synonym">groL</name>
    <name type="ordered locus">PP_1361</name>
</gene>
<sequence length="546" mass="56743">MAAKDVKFGDSARKKMLVGVNVLADAVKATLGPKGRNVVLAKSFGAPTITKDGVSVAKEIELKDAFENMGAQLVKEVASKANDAAGDGTTTATVLAQAIVNEGLKAVAAGMNPMDLKRGIDKATAAVVAELKNLSKPCADSKAIAQVGTISANSDNSIGEIIAEAMEKVGKEGVITVEEGSGLENELSVVEGMQFDRGYLSPYFVNKPDTMVAELEGPLLLLVDKKISNIRELLPVLEAVAKAGRPLLIVAEDVEGEALATLVVNNMRGIVKVAAVKAPGFGDRRKAMLQDIAVLTGGQVISEEIGLSLETATLEHLGNAKRVILSKENTTIIDGAGADTEIEARVKQIRAQIEETSSDYDREKLQERLAKLAGGVAVIKVGAGTEVEMKEKKARVEDALHATRAAVEEGVVPGGGVALVRALAAIIDLKGDNEDQNVGIALLRRAVESPLRQITANAGDEPSVVADKVKQGSGNFGYNAATGEYGDMIEMGILDPAKVTRSALQAAASIGGLMITTEAMVADLPEDKPAAGMPDMGGMGGMGGMM</sequence>
<accession>Q88N55</accession>
<name>CH60_PSEPK</name>
<reference key="1">
    <citation type="journal article" date="2002" name="Environ. Microbiol.">
        <title>Complete genome sequence and comparative analysis of the metabolically versatile Pseudomonas putida KT2440.</title>
        <authorList>
            <person name="Nelson K.E."/>
            <person name="Weinel C."/>
            <person name="Paulsen I.T."/>
            <person name="Dodson R.J."/>
            <person name="Hilbert H."/>
            <person name="Martins dos Santos V.A.P."/>
            <person name="Fouts D.E."/>
            <person name="Gill S.R."/>
            <person name="Pop M."/>
            <person name="Holmes M."/>
            <person name="Brinkac L.M."/>
            <person name="Beanan M.J."/>
            <person name="DeBoy R.T."/>
            <person name="Daugherty S.C."/>
            <person name="Kolonay J.F."/>
            <person name="Madupu R."/>
            <person name="Nelson W.C."/>
            <person name="White O."/>
            <person name="Peterson J.D."/>
            <person name="Khouri H.M."/>
            <person name="Hance I."/>
            <person name="Chris Lee P."/>
            <person name="Holtzapple E.K."/>
            <person name="Scanlan D."/>
            <person name="Tran K."/>
            <person name="Moazzez A."/>
            <person name="Utterback T.R."/>
            <person name="Rizzo M."/>
            <person name="Lee K."/>
            <person name="Kosack D."/>
            <person name="Moestl D."/>
            <person name="Wedler H."/>
            <person name="Lauber J."/>
            <person name="Stjepandic D."/>
            <person name="Hoheisel J."/>
            <person name="Straetz M."/>
            <person name="Heim S."/>
            <person name="Kiewitz C."/>
            <person name="Eisen J.A."/>
            <person name="Timmis K.N."/>
            <person name="Duesterhoeft A."/>
            <person name="Tuemmler B."/>
            <person name="Fraser C.M."/>
        </authorList>
    </citation>
    <scope>NUCLEOTIDE SEQUENCE [LARGE SCALE GENOMIC DNA]</scope>
    <source>
        <strain>ATCC 47054 / DSM 6125 / CFBP 8728 / NCIMB 11950 / KT2440</strain>
    </source>
</reference>
<proteinExistence type="inferred from homology"/>
<protein>
    <recommendedName>
        <fullName evidence="1">Chaperonin GroEL</fullName>
        <ecNumber evidence="1">5.6.1.7</ecNumber>
    </recommendedName>
    <alternativeName>
        <fullName evidence="1">60 kDa chaperonin</fullName>
    </alternativeName>
    <alternativeName>
        <fullName evidence="1">Chaperonin-60</fullName>
        <shortName evidence="1">Cpn60</shortName>
    </alternativeName>
</protein>
<comment type="function">
    <text evidence="1">Together with its co-chaperonin GroES, plays an essential role in assisting protein folding. The GroEL-GroES system forms a nano-cage that allows encapsulation of the non-native substrate proteins and provides a physical environment optimized to promote and accelerate protein folding.</text>
</comment>
<comment type="catalytic activity">
    <reaction evidence="1">
        <text>ATP + H2O + a folded polypeptide = ADP + phosphate + an unfolded polypeptide.</text>
        <dbReference type="EC" id="5.6.1.7"/>
    </reaction>
</comment>
<comment type="subunit">
    <text evidence="1">Forms a cylinder of 14 subunits composed of two heptameric rings stacked back-to-back. Interacts with the co-chaperonin GroES.</text>
</comment>
<comment type="subcellular location">
    <subcellularLocation>
        <location evidence="1">Cytoplasm</location>
    </subcellularLocation>
</comment>
<comment type="similarity">
    <text evidence="1">Belongs to the chaperonin (HSP60) family.</text>
</comment>
<keyword id="KW-0067">ATP-binding</keyword>
<keyword id="KW-0143">Chaperone</keyword>
<keyword id="KW-0963">Cytoplasm</keyword>
<keyword id="KW-0413">Isomerase</keyword>
<keyword id="KW-0547">Nucleotide-binding</keyword>
<keyword id="KW-1185">Reference proteome</keyword>
<dbReference type="EC" id="5.6.1.7" evidence="1"/>
<dbReference type="EMBL" id="AE015451">
    <property type="protein sequence ID" value="AAN66984.1"/>
    <property type="molecule type" value="Genomic_DNA"/>
</dbReference>
<dbReference type="RefSeq" id="NP_743520.1">
    <property type="nucleotide sequence ID" value="NC_002947.4"/>
</dbReference>
<dbReference type="RefSeq" id="WP_010952474.1">
    <property type="nucleotide sequence ID" value="NZ_CP169744.1"/>
</dbReference>
<dbReference type="SMR" id="Q88N55"/>
<dbReference type="STRING" id="160488.PP_1361"/>
<dbReference type="PaxDb" id="160488-PP_1361"/>
<dbReference type="GeneID" id="83682205"/>
<dbReference type="KEGG" id="ppu:PP_1361"/>
<dbReference type="PATRIC" id="fig|160488.4.peg.1442"/>
<dbReference type="eggNOG" id="COG0459">
    <property type="taxonomic scope" value="Bacteria"/>
</dbReference>
<dbReference type="HOGENOM" id="CLU_016503_3_0_6"/>
<dbReference type="OrthoDB" id="9766614at2"/>
<dbReference type="PhylomeDB" id="Q88N55"/>
<dbReference type="BioCyc" id="PPUT160488:G1G01-1450-MONOMER"/>
<dbReference type="Proteomes" id="UP000000556">
    <property type="component" value="Chromosome"/>
</dbReference>
<dbReference type="GO" id="GO:0005737">
    <property type="term" value="C:cytoplasm"/>
    <property type="evidence" value="ECO:0007669"/>
    <property type="project" value="UniProtKB-SubCell"/>
</dbReference>
<dbReference type="GO" id="GO:0005524">
    <property type="term" value="F:ATP binding"/>
    <property type="evidence" value="ECO:0007669"/>
    <property type="project" value="UniProtKB-UniRule"/>
</dbReference>
<dbReference type="GO" id="GO:0140662">
    <property type="term" value="F:ATP-dependent protein folding chaperone"/>
    <property type="evidence" value="ECO:0007669"/>
    <property type="project" value="InterPro"/>
</dbReference>
<dbReference type="GO" id="GO:0016853">
    <property type="term" value="F:isomerase activity"/>
    <property type="evidence" value="ECO:0007669"/>
    <property type="project" value="UniProtKB-KW"/>
</dbReference>
<dbReference type="GO" id="GO:0051082">
    <property type="term" value="F:unfolded protein binding"/>
    <property type="evidence" value="ECO:0007669"/>
    <property type="project" value="UniProtKB-UniRule"/>
</dbReference>
<dbReference type="GO" id="GO:0042026">
    <property type="term" value="P:protein refolding"/>
    <property type="evidence" value="ECO:0007669"/>
    <property type="project" value="UniProtKB-UniRule"/>
</dbReference>
<dbReference type="CDD" id="cd03344">
    <property type="entry name" value="GroEL"/>
    <property type="match status" value="1"/>
</dbReference>
<dbReference type="FunFam" id="1.10.560.10:FF:000001">
    <property type="entry name" value="60 kDa chaperonin"/>
    <property type="match status" value="1"/>
</dbReference>
<dbReference type="FunFam" id="3.50.7.10:FF:000001">
    <property type="entry name" value="60 kDa chaperonin"/>
    <property type="match status" value="1"/>
</dbReference>
<dbReference type="Gene3D" id="3.50.7.10">
    <property type="entry name" value="GroEL"/>
    <property type="match status" value="1"/>
</dbReference>
<dbReference type="Gene3D" id="1.10.560.10">
    <property type="entry name" value="GroEL-like equatorial domain"/>
    <property type="match status" value="1"/>
</dbReference>
<dbReference type="Gene3D" id="3.30.260.10">
    <property type="entry name" value="TCP-1-like chaperonin intermediate domain"/>
    <property type="match status" value="1"/>
</dbReference>
<dbReference type="HAMAP" id="MF_00600">
    <property type="entry name" value="CH60"/>
    <property type="match status" value="1"/>
</dbReference>
<dbReference type="InterPro" id="IPR018370">
    <property type="entry name" value="Chaperonin_Cpn60_CS"/>
</dbReference>
<dbReference type="InterPro" id="IPR001844">
    <property type="entry name" value="Cpn60/GroEL"/>
</dbReference>
<dbReference type="InterPro" id="IPR002423">
    <property type="entry name" value="Cpn60/GroEL/TCP-1"/>
</dbReference>
<dbReference type="InterPro" id="IPR027409">
    <property type="entry name" value="GroEL-like_apical_dom_sf"/>
</dbReference>
<dbReference type="InterPro" id="IPR027413">
    <property type="entry name" value="GROEL-like_equatorial_sf"/>
</dbReference>
<dbReference type="InterPro" id="IPR027410">
    <property type="entry name" value="TCP-1-like_intermed_sf"/>
</dbReference>
<dbReference type="NCBIfam" id="TIGR02348">
    <property type="entry name" value="GroEL"/>
    <property type="match status" value="1"/>
</dbReference>
<dbReference type="NCBIfam" id="NF000592">
    <property type="entry name" value="PRK00013.1"/>
    <property type="match status" value="1"/>
</dbReference>
<dbReference type="NCBIfam" id="NF009487">
    <property type="entry name" value="PRK12849.1"/>
    <property type="match status" value="1"/>
</dbReference>
<dbReference type="NCBIfam" id="NF009488">
    <property type="entry name" value="PRK12850.1"/>
    <property type="match status" value="1"/>
</dbReference>
<dbReference type="NCBIfam" id="NF009489">
    <property type="entry name" value="PRK12851.1"/>
    <property type="match status" value="1"/>
</dbReference>
<dbReference type="PANTHER" id="PTHR45633">
    <property type="entry name" value="60 KDA HEAT SHOCK PROTEIN, MITOCHONDRIAL"/>
    <property type="match status" value="1"/>
</dbReference>
<dbReference type="Pfam" id="PF00118">
    <property type="entry name" value="Cpn60_TCP1"/>
    <property type="match status" value="1"/>
</dbReference>
<dbReference type="PRINTS" id="PR00298">
    <property type="entry name" value="CHAPERONIN60"/>
</dbReference>
<dbReference type="SUPFAM" id="SSF52029">
    <property type="entry name" value="GroEL apical domain-like"/>
    <property type="match status" value="1"/>
</dbReference>
<dbReference type="SUPFAM" id="SSF48592">
    <property type="entry name" value="GroEL equatorial domain-like"/>
    <property type="match status" value="1"/>
</dbReference>
<dbReference type="SUPFAM" id="SSF54849">
    <property type="entry name" value="GroEL-intermediate domain like"/>
    <property type="match status" value="1"/>
</dbReference>
<dbReference type="PROSITE" id="PS00296">
    <property type="entry name" value="CHAPERONINS_CPN60"/>
    <property type="match status" value="1"/>
</dbReference>
<organism>
    <name type="scientific">Pseudomonas putida (strain ATCC 47054 / DSM 6125 / CFBP 8728 / NCIMB 11950 / KT2440)</name>
    <dbReference type="NCBI Taxonomy" id="160488"/>
    <lineage>
        <taxon>Bacteria</taxon>
        <taxon>Pseudomonadati</taxon>
        <taxon>Pseudomonadota</taxon>
        <taxon>Gammaproteobacteria</taxon>
        <taxon>Pseudomonadales</taxon>
        <taxon>Pseudomonadaceae</taxon>
        <taxon>Pseudomonas</taxon>
    </lineage>
</organism>
<feature type="chain" id="PRO_0000063488" description="Chaperonin GroEL">
    <location>
        <begin position="1"/>
        <end position="546"/>
    </location>
</feature>
<feature type="binding site" evidence="1">
    <location>
        <begin position="30"/>
        <end position="33"/>
    </location>
    <ligand>
        <name>ATP</name>
        <dbReference type="ChEBI" id="CHEBI:30616"/>
    </ligand>
</feature>
<feature type="binding site" evidence="1">
    <location>
        <position position="51"/>
    </location>
    <ligand>
        <name>ATP</name>
        <dbReference type="ChEBI" id="CHEBI:30616"/>
    </ligand>
</feature>
<feature type="binding site" evidence="1">
    <location>
        <begin position="87"/>
        <end position="91"/>
    </location>
    <ligand>
        <name>ATP</name>
        <dbReference type="ChEBI" id="CHEBI:30616"/>
    </ligand>
</feature>
<feature type="binding site" evidence="1">
    <location>
        <position position="415"/>
    </location>
    <ligand>
        <name>ATP</name>
        <dbReference type="ChEBI" id="CHEBI:30616"/>
    </ligand>
</feature>
<feature type="binding site" evidence="1">
    <location>
        <begin position="479"/>
        <end position="481"/>
    </location>
    <ligand>
        <name>ATP</name>
        <dbReference type="ChEBI" id="CHEBI:30616"/>
    </ligand>
</feature>
<feature type="binding site" evidence="1">
    <location>
        <position position="495"/>
    </location>
    <ligand>
        <name>ATP</name>
        <dbReference type="ChEBI" id="CHEBI:30616"/>
    </ligand>
</feature>
<evidence type="ECO:0000255" key="1">
    <source>
        <dbReference type="HAMAP-Rule" id="MF_00600"/>
    </source>
</evidence>